<feature type="chain" id="PRO_0000170135" description="Large ribosomal subunit protein bL33">
    <location>
        <begin position="1"/>
        <end position="50"/>
    </location>
</feature>
<comment type="similarity">
    <text evidence="1">Belongs to the bacterial ribosomal protein bL33 family.</text>
</comment>
<sequence length="50" mass="6230">MAREIITLACTECKRRNYTTTKNKQKHPERLELRKYCKWCRKHTIHREVK</sequence>
<name>RL33_AQUAE</name>
<organism>
    <name type="scientific">Aquifex aeolicus (strain VF5)</name>
    <dbReference type="NCBI Taxonomy" id="224324"/>
    <lineage>
        <taxon>Bacteria</taxon>
        <taxon>Pseudomonadati</taxon>
        <taxon>Aquificota</taxon>
        <taxon>Aquificia</taxon>
        <taxon>Aquificales</taxon>
        <taxon>Aquificaceae</taxon>
        <taxon>Aquifex</taxon>
    </lineage>
</organism>
<gene>
    <name type="primary">rpmG</name>
    <name type="ordered locus">aq_1929</name>
    <name type="ORF">aq_1930A</name>
</gene>
<protein>
    <recommendedName>
        <fullName evidence="1">Large ribosomal subunit protein bL33</fullName>
    </recommendedName>
    <alternativeName>
        <fullName>50S ribosomal protein L33</fullName>
    </alternativeName>
</protein>
<reference key="1">
    <citation type="journal article" date="1998" name="Nature">
        <title>The complete genome of the hyperthermophilic bacterium Aquifex aeolicus.</title>
        <authorList>
            <person name="Deckert G."/>
            <person name="Warren P.V."/>
            <person name="Gaasterland T."/>
            <person name="Young W.G."/>
            <person name="Lenox A.L."/>
            <person name="Graham D.E."/>
            <person name="Overbeek R."/>
            <person name="Snead M.A."/>
            <person name="Keller M."/>
            <person name="Aujay M."/>
            <person name="Huber R."/>
            <person name="Feldman R.A."/>
            <person name="Short J.M."/>
            <person name="Olsen G.J."/>
            <person name="Swanson R.V."/>
        </authorList>
    </citation>
    <scope>NUCLEOTIDE SEQUENCE [LARGE SCALE GENOMIC DNA]</scope>
    <source>
        <strain>VF5</strain>
    </source>
</reference>
<accession>O67756</accession>
<dbReference type="EMBL" id="AE000657">
    <property type="protein sequence ID" value="AAC07713.1"/>
    <property type="molecule type" value="Genomic_DNA"/>
</dbReference>
<dbReference type="PIR" id="H70465">
    <property type="entry name" value="H70465"/>
</dbReference>
<dbReference type="RefSeq" id="NP_214324.1">
    <property type="nucleotide sequence ID" value="NC_000918.1"/>
</dbReference>
<dbReference type="RefSeq" id="WP_010881260.1">
    <property type="nucleotide sequence ID" value="NC_000918.1"/>
</dbReference>
<dbReference type="SMR" id="O67756"/>
<dbReference type="FunCoup" id="O67756">
    <property type="interactions" value="412"/>
</dbReference>
<dbReference type="STRING" id="224324.aq_1930a"/>
<dbReference type="EnsemblBacteria" id="AAC07713">
    <property type="protein sequence ID" value="AAC07713"/>
    <property type="gene ID" value="aq_1930a"/>
</dbReference>
<dbReference type="KEGG" id="aae:aq_1930a"/>
<dbReference type="PATRIC" id="fig|224324.8.peg.1494"/>
<dbReference type="eggNOG" id="COG0267">
    <property type="taxonomic scope" value="Bacteria"/>
</dbReference>
<dbReference type="HOGENOM" id="CLU_190949_0_2_0"/>
<dbReference type="InParanoid" id="O67756"/>
<dbReference type="OrthoDB" id="9801333at2"/>
<dbReference type="Proteomes" id="UP000000798">
    <property type="component" value="Chromosome"/>
</dbReference>
<dbReference type="GO" id="GO:0005737">
    <property type="term" value="C:cytoplasm"/>
    <property type="evidence" value="ECO:0007669"/>
    <property type="project" value="UniProtKB-ARBA"/>
</dbReference>
<dbReference type="GO" id="GO:1990904">
    <property type="term" value="C:ribonucleoprotein complex"/>
    <property type="evidence" value="ECO:0007669"/>
    <property type="project" value="UniProtKB-KW"/>
</dbReference>
<dbReference type="GO" id="GO:0005840">
    <property type="term" value="C:ribosome"/>
    <property type="evidence" value="ECO:0007669"/>
    <property type="project" value="UniProtKB-KW"/>
</dbReference>
<dbReference type="GO" id="GO:0003735">
    <property type="term" value="F:structural constituent of ribosome"/>
    <property type="evidence" value="ECO:0007669"/>
    <property type="project" value="InterPro"/>
</dbReference>
<dbReference type="GO" id="GO:0006412">
    <property type="term" value="P:translation"/>
    <property type="evidence" value="ECO:0007669"/>
    <property type="project" value="UniProtKB-UniRule"/>
</dbReference>
<dbReference type="Gene3D" id="2.20.28.120">
    <property type="entry name" value="Ribosomal protein L33"/>
    <property type="match status" value="1"/>
</dbReference>
<dbReference type="HAMAP" id="MF_00294">
    <property type="entry name" value="Ribosomal_bL33"/>
    <property type="match status" value="1"/>
</dbReference>
<dbReference type="InterPro" id="IPR001705">
    <property type="entry name" value="Ribosomal_bL33"/>
</dbReference>
<dbReference type="InterPro" id="IPR018264">
    <property type="entry name" value="Ribosomal_bL33_CS"/>
</dbReference>
<dbReference type="InterPro" id="IPR038584">
    <property type="entry name" value="Ribosomal_bL33_sf"/>
</dbReference>
<dbReference type="InterPro" id="IPR011332">
    <property type="entry name" value="Ribosomal_zn-bd"/>
</dbReference>
<dbReference type="NCBIfam" id="NF001764">
    <property type="entry name" value="PRK00504.1"/>
    <property type="match status" value="1"/>
</dbReference>
<dbReference type="NCBIfam" id="NF001860">
    <property type="entry name" value="PRK00595.1"/>
    <property type="match status" value="1"/>
</dbReference>
<dbReference type="NCBIfam" id="TIGR01023">
    <property type="entry name" value="rpmG_bact"/>
    <property type="match status" value="1"/>
</dbReference>
<dbReference type="PANTHER" id="PTHR43168">
    <property type="entry name" value="50S RIBOSOMAL PROTEIN L33, CHLOROPLASTIC"/>
    <property type="match status" value="1"/>
</dbReference>
<dbReference type="PANTHER" id="PTHR43168:SF2">
    <property type="entry name" value="LARGE RIBOSOMAL SUBUNIT PROTEIN BL33C"/>
    <property type="match status" value="1"/>
</dbReference>
<dbReference type="Pfam" id="PF00471">
    <property type="entry name" value="Ribosomal_L33"/>
    <property type="match status" value="1"/>
</dbReference>
<dbReference type="SUPFAM" id="SSF57829">
    <property type="entry name" value="Zn-binding ribosomal proteins"/>
    <property type="match status" value="1"/>
</dbReference>
<dbReference type="PROSITE" id="PS00582">
    <property type="entry name" value="RIBOSOMAL_L33"/>
    <property type="match status" value="1"/>
</dbReference>
<proteinExistence type="inferred from homology"/>
<evidence type="ECO:0000305" key="1"/>
<keyword id="KW-1185">Reference proteome</keyword>
<keyword id="KW-0687">Ribonucleoprotein</keyword>
<keyword id="KW-0689">Ribosomal protein</keyword>